<dbReference type="EC" id="2.3.1.275" evidence="1"/>
<dbReference type="EMBL" id="CP000097">
    <property type="protein sequence ID" value="ABB25540.1"/>
    <property type="molecule type" value="Genomic_DNA"/>
</dbReference>
<dbReference type="RefSeq" id="WP_011359386.1">
    <property type="nucleotide sequence ID" value="NC_007513.1"/>
</dbReference>
<dbReference type="SMR" id="Q3AZD7"/>
<dbReference type="STRING" id="316279.Syncc9902_0572"/>
<dbReference type="KEGG" id="sye:Syncc9902_0572"/>
<dbReference type="eggNOG" id="COG0344">
    <property type="taxonomic scope" value="Bacteria"/>
</dbReference>
<dbReference type="HOGENOM" id="CLU_081254_7_1_3"/>
<dbReference type="OrthoDB" id="9777124at2"/>
<dbReference type="UniPathway" id="UPA00085"/>
<dbReference type="Proteomes" id="UP000002712">
    <property type="component" value="Chromosome"/>
</dbReference>
<dbReference type="GO" id="GO:0005886">
    <property type="term" value="C:plasma membrane"/>
    <property type="evidence" value="ECO:0007669"/>
    <property type="project" value="UniProtKB-SubCell"/>
</dbReference>
<dbReference type="GO" id="GO:0043772">
    <property type="term" value="F:acyl-phosphate glycerol-3-phosphate acyltransferase activity"/>
    <property type="evidence" value="ECO:0007669"/>
    <property type="project" value="UniProtKB-UniRule"/>
</dbReference>
<dbReference type="GO" id="GO:0008654">
    <property type="term" value="P:phospholipid biosynthetic process"/>
    <property type="evidence" value="ECO:0007669"/>
    <property type="project" value="UniProtKB-UniRule"/>
</dbReference>
<dbReference type="HAMAP" id="MF_01043">
    <property type="entry name" value="PlsY"/>
    <property type="match status" value="1"/>
</dbReference>
<dbReference type="InterPro" id="IPR003811">
    <property type="entry name" value="G3P_acylTferase_PlsY"/>
</dbReference>
<dbReference type="NCBIfam" id="TIGR00023">
    <property type="entry name" value="glycerol-3-phosphate 1-O-acyltransferase PlsY"/>
    <property type="match status" value="1"/>
</dbReference>
<dbReference type="PANTHER" id="PTHR30309:SF0">
    <property type="entry name" value="GLYCEROL-3-PHOSPHATE ACYLTRANSFERASE-RELATED"/>
    <property type="match status" value="1"/>
</dbReference>
<dbReference type="PANTHER" id="PTHR30309">
    <property type="entry name" value="INNER MEMBRANE PROTEIN YGIH"/>
    <property type="match status" value="1"/>
</dbReference>
<dbReference type="Pfam" id="PF02660">
    <property type="entry name" value="G3P_acyltransf"/>
    <property type="match status" value="1"/>
</dbReference>
<dbReference type="SMART" id="SM01207">
    <property type="entry name" value="G3P_acyltransf"/>
    <property type="match status" value="1"/>
</dbReference>
<reference key="1">
    <citation type="submission" date="2005-08" db="EMBL/GenBank/DDBJ databases">
        <title>Complete sequence of Synechococcus sp. CC9902.</title>
        <authorList>
            <person name="Copeland A."/>
            <person name="Lucas S."/>
            <person name="Lapidus A."/>
            <person name="Barry K."/>
            <person name="Detter J.C."/>
            <person name="Glavina T."/>
            <person name="Hammon N."/>
            <person name="Israni S."/>
            <person name="Pitluck S."/>
            <person name="Martinez M."/>
            <person name="Schmutz J."/>
            <person name="Larimer F."/>
            <person name="Land M."/>
            <person name="Kyrpides N."/>
            <person name="Ivanova N."/>
            <person name="Richardson P."/>
        </authorList>
    </citation>
    <scope>NUCLEOTIDE SEQUENCE [LARGE SCALE GENOMIC DNA]</scope>
    <source>
        <strain>CC9902</strain>
    </source>
</reference>
<organism>
    <name type="scientific">Synechococcus sp. (strain CC9902)</name>
    <dbReference type="NCBI Taxonomy" id="316279"/>
    <lineage>
        <taxon>Bacteria</taxon>
        <taxon>Bacillati</taxon>
        <taxon>Cyanobacteriota</taxon>
        <taxon>Cyanophyceae</taxon>
        <taxon>Synechococcales</taxon>
        <taxon>Synechococcaceae</taxon>
        <taxon>Synechococcus</taxon>
    </lineage>
</organism>
<gene>
    <name evidence="1" type="primary">plsY</name>
    <name type="ordered locus">Syncc9902_0572</name>
</gene>
<accession>Q3AZD7</accession>
<proteinExistence type="inferred from homology"/>
<sequence>MLLSSLLLLALGYLLGSMPNGYLAGRWLKGIDLRQCGSGSTGATNVLRNVGKGPALVVFLLDVGKGALAVLLAKSFGLNDWVQVLAGLAALAGHIWPVWLGWKGGKAVATGLGMFLGLAWPVGLACLGLFMAVISLSRIVSLSSVVAAIGLPVLMLTSGGSSAYVAVSVVASLMVLWRHRSNIERLLAGTEPRIGEKGKS</sequence>
<protein>
    <recommendedName>
        <fullName evidence="1">Glycerol-3-phosphate acyltransferase</fullName>
    </recommendedName>
    <alternativeName>
        <fullName evidence="1">Acyl-PO4 G3P acyltransferase</fullName>
    </alternativeName>
    <alternativeName>
        <fullName evidence="1">Acyl-phosphate--glycerol-3-phosphate acyltransferase</fullName>
    </alternativeName>
    <alternativeName>
        <fullName evidence="1">G3P acyltransferase</fullName>
        <shortName evidence="1">GPAT</shortName>
        <ecNumber evidence="1">2.3.1.275</ecNumber>
    </alternativeName>
    <alternativeName>
        <fullName evidence="1">Lysophosphatidic acid synthase</fullName>
        <shortName evidence="1">LPA synthase</shortName>
    </alternativeName>
</protein>
<name>PLSY_SYNS9</name>
<evidence type="ECO:0000255" key="1">
    <source>
        <dbReference type="HAMAP-Rule" id="MF_01043"/>
    </source>
</evidence>
<keyword id="KW-0997">Cell inner membrane</keyword>
<keyword id="KW-1003">Cell membrane</keyword>
<keyword id="KW-0444">Lipid biosynthesis</keyword>
<keyword id="KW-0443">Lipid metabolism</keyword>
<keyword id="KW-0472">Membrane</keyword>
<keyword id="KW-0594">Phospholipid biosynthesis</keyword>
<keyword id="KW-1208">Phospholipid metabolism</keyword>
<keyword id="KW-1185">Reference proteome</keyword>
<keyword id="KW-0808">Transferase</keyword>
<keyword id="KW-0812">Transmembrane</keyword>
<keyword id="KW-1133">Transmembrane helix</keyword>
<feature type="chain" id="PRO_0000250340" description="Glycerol-3-phosphate acyltransferase">
    <location>
        <begin position="1"/>
        <end position="200"/>
    </location>
</feature>
<feature type="transmembrane region" description="Helical" evidence="1">
    <location>
        <begin position="1"/>
        <end position="21"/>
    </location>
</feature>
<feature type="transmembrane region" description="Helical" evidence="1">
    <location>
        <begin position="53"/>
        <end position="73"/>
    </location>
</feature>
<feature type="transmembrane region" description="Helical" evidence="1">
    <location>
        <begin position="81"/>
        <end position="101"/>
    </location>
</feature>
<feature type="transmembrane region" description="Helical" evidence="1">
    <location>
        <begin position="114"/>
        <end position="134"/>
    </location>
</feature>
<feature type="transmembrane region" description="Helical" evidence="1">
    <location>
        <begin position="139"/>
        <end position="159"/>
    </location>
</feature>
<comment type="function">
    <text evidence="1">Catalyzes the transfer of an acyl group from acyl-phosphate (acyl-PO(4)) to glycerol-3-phosphate (G3P) to form lysophosphatidic acid (LPA). This enzyme utilizes acyl-phosphate as fatty acyl donor, but not acyl-CoA or acyl-ACP.</text>
</comment>
<comment type="catalytic activity">
    <reaction evidence="1">
        <text>an acyl phosphate + sn-glycerol 3-phosphate = a 1-acyl-sn-glycero-3-phosphate + phosphate</text>
        <dbReference type="Rhea" id="RHEA:34075"/>
        <dbReference type="ChEBI" id="CHEBI:43474"/>
        <dbReference type="ChEBI" id="CHEBI:57597"/>
        <dbReference type="ChEBI" id="CHEBI:57970"/>
        <dbReference type="ChEBI" id="CHEBI:59918"/>
        <dbReference type="EC" id="2.3.1.275"/>
    </reaction>
</comment>
<comment type="pathway">
    <text evidence="1">Lipid metabolism; phospholipid metabolism.</text>
</comment>
<comment type="subunit">
    <text evidence="1">Probably interacts with PlsX.</text>
</comment>
<comment type="subcellular location">
    <subcellularLocation>
        <location evidence="1">Cell inner membrane</location>
        <topology evidence="1">Multi-pass membrane protein</topology>
    </subcellularLocation>
</comment>
<comment type="similarity">
    <text evidence="1">Belongs to the PlsY family.</text>
</comment>